<keyword id="KW-0472">Membrane</keyword>
<keyword id="KW-1185">Reference proteome</keyword>
<keyword id="KW-0812">Transmembrane</keyword>
<keyword id="KW-1133">Transmembrane helix</keyword>
<proteinExistence type="evidence at protein level"/>
<evidence type="ECO:0000255" key="1"/>
<evidence type="ECO:0000269" key="2">
    <source>
    </source>
</evidence>
<evidence type="ECO:0000269" key="3">
    <source>
    </source>
</evidence>
<evidence type="ECO:0000269" key="4">
    <source>
    </source>
</evidence>
<evidence type="ECO:0000303" key="5">
    <source>
    </source>
</evidence>
<evidence type="ECO:0000305" key="6"/>
<evidence type="ECO:0000305" key="7">
    <source>
    </source>
</evidence>
<evidence type="ECO:0000312" key="8">
    <source>
        <dbReference type="SGD" id="S000000470"/>
    </source>
</evidence>
<gene>
    <name evidence="5" type="primary">SLM6</name>
    <name evidence="8" type="ordered locus">YBR266C</name>
    <name type="ORF">YBR1735</name>
</gene>
<sequence>MCSRFSSTSLKCLLCSQNRHCSSGISTLLRSFSCITLSAISSSVNCSGSSFLGSSFSLFSSFSCKESLLRSGVFPSWLFCMFSSILALAISNSFFFFSSNACFSLLFNSFLVTGFSFSADLLVLAAAADTLESNVSNDIGGNCATRLFKL</sequence>
<organism>
    <name type="scientific">Saccharomyces cerevisiae (strain ATCC 204508 / S288c)</name>
    <name type="common">Baker's yeast</name>
    <dbReference type="NCBI Taxonomy" id="559292"/>
    <lineage>
        <taxon>Eukaryota</taxon>
        <taxon>Fungi</taxon>
        <taxon>Dikarya</taxon>
        <taxon>Ascomycota</taxon>
        <taxon>Saccharomycotina</taxon>
        <taxon>Saccharomycetes</taxon>
        <taxon>Saccharomycetales</taxon>
        <taxon>Saccharomycetaceae</taxon>
        <taxon>Saccharomyces</taxon>
    </lineage>
</organism>
<comment type="subcellular location">
    <subcellularLocation>
        <location evidence="1">Membrane</location>
        <topology evidence="1">Multi-pass membrane protein</topology>
    </subcellularLocation>
</comment>
<comment type="disruption phenotype">
    <text evidence="3">Synthetic lethal with MSS4.</text>
</comment>
<comment type="miscellaneous">
    <text evidence="2">Present with 339 molecules/cell in log phase SD medium.</text>
</comment>
<protein>
    <recommendedName>
        <fullName evidence="6">Protein SLM6</fullName>
    </recommendedName>
    <alternativeName>
        <fullName evidence="5">Synthetic lethal with MSS4 protein 6</fullName>
    </alternativeName>
</protein>
<name>SLM6_YEAST</name>
<feature type="chain" id="PRO_0000202528" description="Protein SLM6">
    <location>
        <begin position="1"/>
        <end position="150"/>
    </location>
</feature>
<feature type="topological domain" description="Extracellular" evidence="7">
    <location>
        <begin position="1"/>
        <end position="76"/>
    </location>
</feature>
<feature type="transmembrane region" description="Helical" evidence="1">
    <location>
        <begin position="77"/>
        <end position="97"/>
    </location>
</feature>
<feature type="topological domain" description="Cytoplasmic" evidence="7">
    <location>
        <begin position="98"/>
        <end position="104"/>
    </location>
</feature>
<feature type="transmembrane region" description="Helical" evidence="1">
    <location>
        <begin position="105"/>
        <end position="125"/>
    </location>
</feature>
<feature type="topological domain" description="Extracellular" evidence="4">
    <location>
        <begin position="126"/>
        <end position="150"/>
    </location>
</feature>
<feature type="sequence conflict" description="In Ref. 1; CAA49932 and 2; CAA85230." evidence="6" ref="1 2">
    <original>S</original>
    <variation>T</variation>
    <location>
        <position position="31"/>
    </location>
</feature>
<dbReference type="EMBL" id="X70529">
    <property type="protein sequence ID" value="CAA49932.1"/>
    <property type="molecule type" value="Genomic_DNA"/>
</dbReference>
<dbReference type="EMBL" id="Z36135">
    <property type="protein sequence ID" value="CAA85230.1"/>
    <property type="molecule type" value="Genomic_DNA"/>
</dbReference>
<dbReference type="EMBL" id="BK006936">
    <property type="protein sequence ID" value="DAD54803.1"/>
    <property type="molecule type" value="Genomic_DNA"/>
</dbReference>
<dbReference type="PIR" id="S32968">
    <property type="entry name" value="S32968"/>
</dbReference>
<dbReference type="RefSeq" id="NP_001381962.1">
    <property type="nucleotide sequence ID" value="NM_001395042.1"/>
</dbReference>
<dbReference type="DIP" id="DIP-4955N"/>
<dbReference type="FunCoup" id="P38343">
    <property type="interactions" value="26"/>
</dbReference>
<dbReference type="IntAct" id="P38343">
    <property type="interactions" value="2"/>
</dbReference>
<dbReference type="STRING" id="4932.YBR266C"/>
<dbReference type="iPTMnet" id="P38343"/>
<dbReference type="PaxDb" id="4932-YBR266C"/>
<dbReference type="EnsemblFungi" id="YBR266C_mRNA">
    <property type="protein sequence ID" value="YBR266C"/>
    <property type="gene ID" value="YBR266C"/>
</dbReference>
<dbReference type="GeneID" id="852570"/>
<dbReference type="AGR" id="SGD:S000000470"/>
<dbReference type="SGD" id="S000000470">
    <property type="gene designation" value="SLM6"/>
</dbReference>
<dbReference type="HOGENOM" id="CLU_1741999_0_0_1"/>
<dbReference type="InParanoid" id="P38343"/>
<dbReference type="PRO" id="PR:P38343"/>
<dbReference type="Proteomes" id="UP000002311">
    <property type="component" value="Chromosome II"/>
</dbReference>
<dbReference type="RNAct" id="P38343">
    <property type="molecule type" value="protein"/>
</dbReference>
<dbReference type="GO" id="GO:0016020">
    <property type="term" value="C:membrane"/>
    <property type="evidence" value="ECO:0007669"/>
    <property type="project" value="UniProtKB-SubCell"/>
</dbReference>
<dbReference type="GO" id="GO:0006897">
    <property type="term" value="P:endocytosis"/>
    <property type="evidence" value="ECO:0000315"/>
    <property type="project" value="SGD"/>
</dbReference>
<reference key="1">
    <citation type="journal article" date="1993" name="Yeast">
        <title>The complete sequence of a 19,482 bp segment located on the right arm of chromosome II from Saccharomyces cerevisiae.</title>
        <authorList>
            <person name="Doignon F."/>
            <person name="Biteau N."/>
            <person name="Crouzet M."/>
            <person name="Aigle M."/>
        </authorList>
    </citation>
    <scope>NUCLEOTIDE SEQUENCE [GENOMIC DNA]</scope>
    <source>
        <strain>ATCC 204508 / S288c</strain>
    </source>
</reference>
<reference key="2">
    <citation type="journal article" date="1994" name="EMBO J.">
        <title>Complete DNA sequence of yeast chromosome II.</title>
        <authorList>
            <person name="Feldmann H."/>
            <person name="Aigle M."/>
            <person name="Aljinovic G."/>
            <person name="Andre B."/>
            <person name="Baclet M.C."/>
            <person name="Barthe C."/>
            <person name="Baur A."/>
            <person name="Becam A.-M."/>
            <person name="Biteau N."/>
            <person name="Boles E."/>
            <person name="Brandt T."/>
            <person name="Brendel M."/>
            <person name="Brueckner M."/>
            <person name="Bussereau F."/>
            <person name="Christiansen C."/>
            <person name="Contreras R."/>
            <person name="Crouzet M."/>
            <person name="Cziepluch C."/>
            <person name="Demolis N."/>
            <person name="Delaveau T."/>
            <person name="Doignon F."/>
            <person name="Domdey H."/>
            <person name="Duesterhus S."/>
            <person name="Dubois E."/>
            <person name="Dujon B."/>
            <person name="El Bakkoury M."/>
            <person name="Entian K.-D."/>
            <person name="Feuermann M."/>
            <person name="Fiers W."/>
            <person name="Fobo G.M."/>
            <person name="Fritz C."/>
            <person name="Gassenhuber J."/>
            <person name="Glansdorff N."/>
            <person name="Goffeau A."/>
            <person name="Grivell L.A."/>
            <person name="de Haan M."/>
            <person name="Hein C."/>
            <person name="Herbert C.J."/>
            <person name="Hollenberg C.P."/>
            <person name="Holmstroem K."/>
            <person name="Jacq C."/>
            <person name="Jacquet M."/>
            <person name="Jauniaux J.-C."/>
            <person name="Jonniaux J.-L."/>
            <person name="Kallesoee T."/>
            <person name="Kiesau P."/>
            <person name="Kirchrath L."/>
            <person name="Koetter P."/>
            <person name="Korol S."/>
            <person name="Liebl S."/>
            <person name="Logghe M."/>
            <person name="Lohan A.J.E."/>
            <person name="Louis E.J."/>
            <person name="Li Z.Y."/>
            <person name="Maat M.J."/>
            <person name="Mallet L."/>
            <person name="Mannhaupt G."/>
            <person name="Messenguy F."/>
            <person name="Miosga T."/>
            <person name="Molemans F."/>
            <person name="Mueller S."/>
            <person name="Nasr F."/>
            <person name="Obermaier B."/>
            <person name="Perea J."/>
            <person name="Pierard A."/>
            <person name="Piravandi E."/>
            <person name="Pohl F.M."/>
            <person name="Pohl T.M."/>
            <person name="Potier S."/>
            <person name="Proft M."/>
            <person name="Purnelle B."/>
            <person name="Ramezani Rad M."/>
            <person name="Rieger M."/>
            <person name="Rose M."/>
            <person name="Schaaff-Gerstenschlaeger I."/>
            <person name="Scherens B."/>
            <person name="Schwarzlose C."/>
            <person name="Skala J."/>
            <person name="Slonimski P.P."/>
            <person name="Smits P.H.M."/>
            <person name="Souciet J.-L."/>
            <person name="Steensma H.Y."/>
            <person name="Stucka R."/>
            <person name="Urrestarazu L.A."/>
            <person name="van der Aart Q.J.M."/>
            <person name="Van Dyck L."/>
            <person name="Vassarotti A."/>
            <person name="Vetter I."/>
            <person name="Vierendeels F."/>
            <person name="Vissers S."/>
            <person name="Wagner G."/>
            <person name="de Wergifosse P."/>
            <person name="Wolfe K.H."/>
            <person name="Zagulski M."/>
            <person name="Zimmermann F.K."/>
            <person name="Mewes H.-W."/>
            <person name="Kleine K."/>
        </authorList>
    </citation>
    <scope>NUCLEOTIDE SEQUENCE [LARGE SCALE GENOMIC DNA]</scope>
    <source>
        <strain>ATCC 204508 / S288c</strain>
    </source>
</reference>
<reference key="3">
    <citation type="journal article" date="2014" name="G3 (Bethesda)">
        <title>The reference genome sequence of Saccharomyces cerevisiae: Then and now.</title>
        <authorList>
            <person name="Engel S.R."/>
            <person name="Dietrich F.S."/>
            <person name="Fisk D.G."/>
            <person name="Binkley G."/>
            <person name="Balakrishnan R."/>
            <person name="Costanzo M.C."/>
            <person name="Dwight S.S."/>
            <person name="Hitz B.C."/>
            <person name="Karra K."/>
            <person name="Nash R.S."/>
            <person name="Weng S."/>
            <person name="Wong E.D."/>
            <person name="Lloyd P."/>
            <person name="Skrzypek M.S."/>
            <person name="Miyasato S.R."/>
            <person name="Simison M."/>
            <person name="Cherry J.M."/>
        </authorList>
    </citation>
    <scope>GENOME REANNOTATION</scope>
    <source>
        <strain>ATCC 204508 / S288c</strain>
    </source>
</reference>
<reference key="4">
    <citation type="submission" date="1997-03" db="EMBL/GenBank/DDBJ databases">
        <authorList>
            <person name="Aigle M."/>
            <person name="Baclet M.C."/>
            <person name="Barthe C."/>
            <person name="Biteau N."/>
            <person name="Crouzet M."/>
            <person name="Doignon F."/>
        </authorList>
    </citation>
    <scope>SEQUENCE REVISION TO C-TERMINUS</scope>
</reference>
<reference key="5">
    <citation type="journal article" date="2003" name="Nature">
        <title>Global analysis of protein expression in yeast.</title>
        <authorList>
            <person name="Ghaemmaghami S."/>
            <person name="Huh W.-K."/>
            <person name="Bower K."/>
            <person name="Howson R.W."/>
            <person name="Belle A."/>
            <person name="Dephoure N."/>
            <person name="O'Shea E.K."/>
            <person name="Weissman J.S."/>
        </authorList>
    </citation>
    <scope>LEVEL OF PROTEIN EXPRESSION [LARGE SCALE ANALYSIS]</scope>
</reference>
<reference key="6">
    <citation type="journal article" date="2004" name="EMBO J.">
        <title>Genome-wide lethality screen identifies new PI4,5P2 effectors that regulate the actin cytoskeleton.</title>
        <authorList>
            <person name="Audhya A."/>
            <person name="Loewith R."/>
            <person name="Parsons A.B."/>
            <person name="Gao L."/>
            <person name="Tabuchi M."/>
            <person name="Zhou H."/>
            <person name="Boone C."/>
            <person name="Hall M.N."/>
            <person name="Emr S.D."/>
        </authorList>
    </citation>
    <scope>DISRUPTION PHENOTYPE</scope>
</reference>
<reference key="7">
    <citation type="journal article" date="2006" name="Proc. Natl. Acad. Sci. U.S.A.">
        <title>A global topology map of the Saccharomyces cerevisiae membrane proteome.</title>
        <authorList>
            <person name="Kim H."/>
            <person name="Melen K."/>
            <person name="Oesterberg M."/>
            <person name="von Heijne G."/>
        </authorList>
    </citation>
    <scope>TOPOLOGY [LARGE SCALE ANALYSIS]</scope>
    <source>
        <strain>ATCC 208353 / W303-1A</strain>
    </source>
</reference>
<accession>P38343</accession>
<accession>A0A8D9PCQ2</accession>